<sequence>MFSLQDLCRKHLFILPDVFGEHVLQQLGLYWEKHGSLQRIGNDHILIRRDLILSINEALKIAAEEGNNEVVKLLLLWKGNLHYAIIGALEGDQYDLIYTYENQIEDYHHILPLIQDAKTFEKCHALERFCDVPCLLEHAIKHNMLPILQKYQEELFIRVYLRETLFELACLWQRYDILKWIEQTMHVYDLKIIFNIAISKRDLSMYSLGYVLLFDRGNTEATLLTQHLEKTAAKGLLHFVLETLKYGGNINIVLSQAVKYNHRKLLDYFLRQLPRKNIEKLLLLAVQEKASKKTLNLLLSYLNYSVKRIKKLLRYVIEYESTLVIRILLKKRINLIDAVLEKTVRYFSETKVKTIMDELSINPEKVIKMAIQKMRTDIVIQTSYIWEDDLERLIRLKNMVYTIKYEHGKKMLMKVIHGIYKNLLHDEKEKVMFHLAKFYIAQNAATQFRDICKDCCKLDVARFKPRFKQLILDCLDIITKKTCLNIMEILENHIISLFAMKMMTEDEKNLGLELLYKVISYKMISY</sequence>
<dbReference type="EMBL" id="AY261360">
    <property type="status" value="NOT_ANNOTATED_CDS"/>
    <property type="molecule type" value="Genomic_DNA"/>
</dbReference>
<dbReference type="SMR" id="P0C9S7"/>
<dbReference type="Proteomes" id="UP000000861">
    <property type="component" value="Segment"/>
</dbReference>
<dbReference type="InterPro" id="IPR004858">
    <property type="entry name" value="MGF_505"/>
</dbReference>
<dbReference type="Pfam" id="PF03158">
    <property type="entry name" value="DUF249"/>
    <property type="match status" value="1"/>
</dbReference>
<organism>
    <name type="scientific">African swine fever virus (isolate Pig/Kenya/KEN-50/1950)</name>
    <name type="common">ASFV</name>
    <dbReference type="NCBI Taxonomy" id="561445"/>
    <lineage>
        <taxon>Viruses</taxon>
        <taxon>Varidnaviria</taxon>
        <taxon>Bamfordvirae</taxon>
        <taxon>Nucleocytoviricota</taxon>
        <taxon>Pokkesviricetes</taxon>
        <taxon>Asfuvirales</taxon>
        <taxon>Asfarviridae</taxon>
        <taxon>Asfivirus</taxon>
        <taxon>African swine fever virus</taxon>
    </lineage>
</organism>
<gene>
    <name type="ordered locus">Ken-039</name>
</gene>
<keyword id="KW-0426">Late protein</keyword>
<accession>P0C9S7</accession>
<evidence type="ECO:0000250" key="1">
    <source>
        <dbReference type="UniProtKB" id="Q89702"/>
    </source>
</evidence>
<evidence type="ECO:0000305" key="2"/>
<organismHost>
    <name type="scientific">Ornithodoros</name>
    <name type="common">relapsing fever ticks</name>
    <dbReference type="NCBI Taxonomy" id="6937"/>
</organismHost>
<organismHost>
    <name type="scientific">Phacochoerus aethiopicus</name>
    <name type="common">Warthog</name>
    <dbReference type="NCBI Taxonomy" id="85517"/>
</organismHost>
<organismHost>
    <name type="scientific">Phacochoerus africanus</name>
    <name type="common">Warthog</name>
    <dbReference type="NCBI Taxonomy" id="41426"/>
</organismHost>
<organismHost>
    <name type="scientific">Potamochoerus larvatus</name>
    <name type="common">Bushpig</name>
    <dbReference type="NCBI Taxonomy" id="273792"/>
</organismHost>
<organismHost>
    <name type="scientific">Sus scrofa</name>
    <name type="common">Pig</name>
    <dbReference type="NCBI Taxonomy" id="9823"/>
</organismHost>
<name>5052R_ASFK5</name>
<protein>
    <recommendedName>
        <fullName>Protein MGF 505-2R</fullName>
    </recommendedName>
</protein>
<reference key="1">
    <citation type="submission" date="2003-03" db="EMBL/GenBank/DDBJ databases">
        <title>African swine fever virus genomes.</title>
        <authorList>
            <person name="Kutish G.F."/>
            <person name="Rock D.L."/>
        </authorList>
    </citation>
    <scope>NUCLEOTIDE SEQUENCE [LARGE SCALE GENOMIC DNA]</scope>
</reference>
<proteinExistence type="inferred from homology"/>
<feature type="chain" id="PRO_0000373318" description="Protein MGF 505-2R">
    <location>
        <begin position="1"/>
        <end position="526"/>
    </location>
</feature>
<comment type="function">
    <text evidence="1">Plays a role in virus cell tropism, and may be required for efficient virus replication in macrophages.</text>
</comment>
<comment type="induction">
    <text evidence="2">Expressed in the late phase of the viral replicative cycle.</text>
</comment>
<comment type="similarity">
    <text evidence="2">Belongs to the asfivirus MGF 505 family.</text>
</comment>